<protein>
    <recommendedName>
        <fullName evidence="1">Merozoite surface protein 9</fullName>
    </recommendedName>
    <alternativeName>
        <fullName evidence="6">101 kDa malaria antigen</fullName>
    </alternativeName>
    <alternativeName>
        <fullName evidence="6">Acidic basic repeat antigen</fullName>
    </alternativeName>
    <alternativeName>
        <fullName evidence="6">p101 protein</fullName>
    </alternativeName>
</protein>
<name>MSP9_PLAFC</name>
<organism>
    <name type="scientific">Plasmodium falciparum (isolate Camp / Malaysia)</name>
    <dbReference type="NCBI Taxonomy" id="5835"/>
    <lineage>
        <taxon>Eukaryota</taxon>
        <taxon>Sar</taxon>
        <taxon>Alveolata</taxon>
        <taxon>Apicomplexa</taxon>
        <taxon>Aconoidasida</taxon>
        <taxon>Haemosporida</taxon>
        <taxon>Plasmodiidae</taxon>
        <taxon>Plasmodium</taxon>
        <taxon>Plasmodium (Laverania)</taxon>
    </lineage>
</organism>
<dbReference type="EMBL" id="J03902">
    <property type="protein sequence ID" value="AAA29462.1"/>
    <property type="molecule type" value="Genomic_DNA"/>
</dbReference>
<dbReference type="PIR" id="A29232">
    <property type="entry name" value="A29232"/>
</dbReference>
<dbReference type="BMRB" id="P22620"/>
<dbReference type="SMR" id="P22620"/>
<dbReference type="OMA" id="MKECKHL"/>
<dbReference type="GO" id="GO:0005576">
    <property type="term" value="C:extracellular region"/>
    <property type="evidence" value="ECO:0007669"/>
    <property type="project" value="UniProtKB-SubCell"/>
</dbReference>
<dbReference type="GO" id="GO:0005634">
    <property type="term" value="C:nucleus"/>
    <property type="evidence" value="ECO:0007669"/>
    <property type="project" value="TreeGrafter"/>
</dbReference>
<dbReference type="GO" id="GO:0005886">
    <property type="term" value="C:plasma membrane"/>
    <property type="evidence" value="ECO:0007669"/>
    <property type="project" value="UniProtKB-SubCell"/>
</dbReference>
<dbReference type="PANTHER" id="PTHR13275:SF4">
    <property type="entry name" value="VACUOLAR PROTEIN SORTING-ASSOCIATED PROTEIN 72 HOMOLOG"/>
    <property type="match status" value="1"/>
</dbReference>
<dbReference type="PANTHER" id="PTHR13275">
    <property type="entry name" value="YL-1 PROTEIN TRANSCRIPTION FACTOR-LIKE 1"/>
    <property type="match status" value="1"/>
</dbReference>
<proteinExistence type="evidence at protein level"/>
<comment type="function">
    <text evidence="1">During the asexual blood stage, involved in the sialic acid-independent (SAID) merozoite invasion of host erythrocytes by binding to host SLC4A1/Band 3 protein on the surface of the host erythrocyte.</text>
</comment>
<comment type="subunit">
    <text evidence="1">Forms a complex composed of MSP1, MSP6, MSP7, MSP9 and MSP3; within the complex, MSP6 and MSP9 mediate the binding to the host erythrocyte. Interacts with MSP1 subunits p19 and p42; the interaction is direct. Interacts with host SLC4A1/Band 3 protein (via the 5ABC region). MSP1 subunits p19 or p42, and MSP9 form a co-ligand complex that interacts with host SLC4A1/Band 3 protein.</text>
</comment>
<comment type="subcellular location">
    <subcellularLocation>
        <location evidence="2">Cell membrane</location>
        <topology evidence="2">Peripheral membrane protein</topology>
        <orientation evidence="2">Extracellular side</orientation>
    </subcellularLocation>
    <subcellularLocation>
        <location evidence="2">Parasitophorous vacuole lumen</location>
    </subcellularLocation>
    <subcellularLocation>
        <location evidence="2">Secreted</location>
    </subcellularLocation>
    <text evidence="2">Localizes to the merozoite surface at the time of schizont rupture.</text>
</comment>
<comment type="PTM">
    <text evidence="5">Not glycosylated.</text>
</comment>
<comment type="similarity">
    <text evidence="7">Belongs to the plasmodium ABRA family.</text>
</comment>
<comment type="caution">
    <text evidence="1">A truncated form of MSP9 has serine protease activity in vitro; however, it is not clear if this is physiologically relevant (By similarity). Also, the putative residues forming the catalytic triad (His-55, Asp-94, and Ser-190) are not conserved in P.vivax, P.knowlesi, and P.cynomolgi orthologs casting a doubt on the physiological relevance of the protease activity (By similarity).</text>
</comment>
<accession>P22620</accession>
<sequence>MMNMKIVLFSLLLFVIRWNIISCNKNDKNQGVDMNVLNNYENLFKFVKCEYCNEHTYVKGKKAPSDPQCADIKEECKELLKEKQYTDSVTYLMDGFKSANNSANNGKKNNAEEMKNLVNFLQSHKKLIKALKKNIESIQNKKHLIYKNKSYNPLLLSCVKKMNMLKENVDYIQKNQNLFKELMNQKATYSFVNTKKKIISLKSQGHKKETSQNQNENNDNQKYQEVNDEDDVNDEEDTNDDEDTNDEEDTNDDEDTNDDEDTNDEEDTNDEEDHENNNATAYELGIVPVNDVLNVNMKNMITGNNFMDVVKNTLAQSGGLGSNDLINFLNQGKEIGENLLNITKMNLGDKNNLESFPLDELNMLKDNLINYEFILDNLKTSVLNKLKDLLLRLLYKAYVSYKKRKAQEKGLPEPTVTNEEYVEELKKGILDMGIKLLFSKVKSLLKKLKNKIFPKKKEDNQAVDTKSMEEPKVKAQPALRGVEPTEDSNIMNSINNVMDEIDFFEKELIENNNTPNVVPPTQSKKKNKNETVSGMDENFDNHPENYFKEEYYYDENDDMEVKVKKIGVTLKKFEPLKNGNVSETIKLIHLGNKDKKHIEAINNDIQIIKQELQAIYNELMNYTNGNKNIQQIFQQNILENDVLNQETEEEMEKQVEAITKQIEAEVDALAPKNKEEEEKEKEKEKEKEEKEKEEKEKEEKEKEKEEKEKEKEEKEEEKKEKEEEQEEEEEEIVPENLTTEESK</sequence>
<feature type="signal peptide" evidence="3">
    <location>
        <begin position="1"/>
        <end position="23"/>
    </location>
</feature>
<feature type="chain" id="PRO_0000217177" description="Merozoite surface protein 9" evidence="3">
    <location>
        <begin position="24"/>
        <end position="743"/>
    </location>
</feature>
<feature type="repeat" description="1" evidence="8">
    <location>
        <begin position="226"/>
        <end position="231"/>
    </location>
</feature>
<feature type="repeat" description="2" evidence="8">
    <location>
        <begin position="232"/>
        <end position="237"/>
    </location>
</feature>
<feature type="repeat" description="3" evidence="8">
    <location>
        <begin position="238"/>
        <end position="243"/>
    </location>
</feature>
<feature type="repeat" description="4" evidence="8">
    <location>
        <begin position="244"/>
        <end position="249"/>
    </location>
</feature>
<feature type="repeat" description="5" evidence="8">
    <location>
        <begin position="250"/>
        <end position="255"/>
    </location>
</feature>
<feature type="repeat" description="6" evidence="8">
    <location>
        <begin position="256"/>
        <end position="261"/>
    </location>
</feature>
<feature type="repeat" description="7" evidence="8">
    <location>
        <begin position="262"/>
        <end position="267"/>
    </location>
</feature>
<feature type="repeat" description="8" evidence="8">
    <location>
        <begin position="268"/>
        <end position="273"/>
    </location>
</feature>
<feature type="region of interest" description="Interaction with MSP1 and host SLC4A1/Band 3" evidence="1">
    <location>
        <begin position="77"/>
        <end position="235"/>
    </location>
</feature>
<feature type="region of interest" description="Disordered" evidence="4">
    <location>
        <begin position="202"/>
        <end position="282"/>
    </location>
</feature>
<feature type="region of interest" description="8 X 6 AA tandem repeats of [VT]-N-D-[ED]-[ED]-D" evidence="8">
    <location>
        <begin position="226"/>
        <end position="273"/>
    </location>
</feature>
<feature type="region of interest" description="Interaction with MSP1 and host SLC4A1/Band 3" evidence="1">
    <location>
        <begin position="364"/>
        <end position="528"/>
    </location>
</feature>
<feature type="region of interest" description="Disordered" evidence="4">
    <location>
        <begin position="459"/>
        <end position="487"/>
    </location>
</feature>
<feature type="region of interest" description="Disordered" evidence="4">
    <location>
        <begin position="512"/>
        <end position="540"/>
    </location>
</feature>
<feature type="region of interest" description="Disordered" evidence="4">
    <location>
        <begin position="666"/>
        <end position="743"/>
    </location>
</feature>
<feature type="coiled-coil region" evidence="3">
    <location>
        <begin position="644"/>
        <end position="732"/>
    </location>
</feature>
<feature type="compositionally biased region" description="Polar residues" evidence="4">
    <location>
        <begin position="211"/>
        <end position="224"/>
    </location>
</feature>
<feature type="compositionally biased region" description="Acidic residues" evidence="4">
    <location>
        <begin position="226"/>
        <end position="274"/>
    </location>
</feature>
<feature type="compositionally biased region" description="Basic and acidic residues" evidence="4">
    <location>
        <begin position="459"/>
        <end position="473"/>
    </location>
</feature>
<feature type="compositionally biased region" description="Low complexity" evidence="4">
    <location>
        <begin position="512"/>
        <end position="521"/>
    </location>
</feature>
<feature type="compositionally biased region" description="Basic and acidic residues" evidence="4">
    <location>
        <begin position="672"/>
        <end position="722"/>
    </location>
</feature>
<feature type="compositionally biased region" description="Acidic residues" evidence="4">
    <location>
        <begin position="723"/>
        <end position="733"/>
    </location>
</feature>
<evidence type="ECO:0000250" key="1">
    <source>
        <dbReference type="UniProtKB" id="Q8I5D2"/>
    </source>
</evidence>
<evidence type="ECO:0000250" key="2">
    <source>
        <dbReference type="UniProtKB" id="W7F8N2"/>
    </source>
</evidence>
<evidence type="ECO:0000255" key="3"/>
<evidence type="ECO:0000256" key="4">
    <source>
        <dbReference type="SAM" id="MobiDB-lite"/>
    </source>
</evidence>
<evidence type="ECO:0000269" key="5">
    <source>
    </source>
</evidence>
<evidence type="ECO:0000303" key="6">
    <source>
    </source>
</evidence>
<evidence type="ECO:0000305" key="7"/>
<evidence type="ECO:0000305" key="8">
    <source>
    </source>
</evidence>
<gene>
    <name evidence="1" type="primary">MSP9</name>
    <name evidence="6" type="synonym">ABRA</name>
</gene>
<reference key="1">
    <citation type="journal article" date="1988" name="J. Biol. Chem.">
        <title>Primary structure of a Plasmodium falciparum malaria antigen located at the merozoite surface and within the parasitophorous vacuole.</title>
        <authorList>
            <person name="Weber J.L."/>
            <person name="Lyon J.A."/>
            <person name="Wolff R.H."/>
            <person name="Hall T."/>
            <person name="Lowell G.H."/>
            <person name="Chulay J.D."/>
        </authorList>
    </citation>
    <scope>NUCLEOTIDE SEQUENCE [GENOMIC DNA]</scope>
    <scope>REPEATS</scope>
    <scope>LACK OF GLYCOSYLATION</scope>
</reference>
<keyword id="KW-1003">Cell membrane</keyword>
<keyword id="KW-0175">Coiled coil</keyword>
<keyword id="KW-0461">Malaria</keyword>
<keyword id="KW-0472">Membrane</keyword>
<keyword id="KW-0677">Repeat</keyword>
<keyword id="KW-0964">Secreted</keyword>
<keyword id="KW-0732">Signal</keyword>